<feature type="chain" id="PRO_1000069467" description="Pyridoxal 5'-phosphate synthase subunit PdxT">
    <location>
        <begin position="1"/>
        <end position="198"/>
    </location>
</feature>
<feature type="active site" description="Nucleophile" evidence="1">
    <location>
        <position position="81"/>
    </location>
</feature>
<feature type="active site" description="Charge relay system" evidence="1">
    <location>
        <position position="177"/>
    </location>
</feature>
<feature type="active site" description="Charge relay system" evidence="1">
    <location>
        <position position="179"/>
    </location>
</feature>
<feature type="binding site" evidence="1">
    <location>
        <begin position="49"/>
        <end position="51"/>
    </location>
    <ligand>
        <name>L-glutamine</name>
        <dbReference type="ChEBI" id="CHEBI:58359"/>
    </ligand>
</feature>
<feature type="binding site" evidence="1">
    <location>
        <position position="113"/>
    </location>
    <ligand>
        <name>L-glutamine</name>
        <dbReference type="ChEBI" id="CHEBI:58359"/>
    </ligand>
</feature>
<feature type="binding site" evidence="1">
    <location>
        <begin position="141"/>
        <end position="142"/>
    </location>
    <ligand>
        <name>L-glutamine</name>
        <dbReference type="ChEBI" id="CHEBI:58359"/>
    </ligand>
</feature>
<reference key="1">
    <citation type="journal article" date="2008" name="PLoS ONE">
        <title>Genetic basis of virulence attenuation revealed by comparative genomic analysis of Mycobacterium tuberculosis strain H37Ra versus H37Rv.</title>
        <authorList>
            <person name="Zheng H."/>
            <person name="Lu L."/>
            <person name="Wang B."/>
            <person name="Pu S."/>
            <person name="Zhang X."/>
            <person name="Zhu G."/>
            <person name="Shi W."/>
            <person name="Zhang L."/>
            <person name="Wang H."/>
            <person name="Wang S."/>
            <person name="Zhao G."/>
            <person name="Zhang Y."/>
        </authorList>
    </citation>
    <scope>NUCLEOTIDE SEQUENCE [LARGE SCALE GENOMIC DNA]</scope>
    <source>
        <strain>ATCC 25177 / H37Ra</strain>
    </source>
</reference>
<sequence length="198" mass="21072">MSVPRVGVLALQGDTREHLAALRECGAEPMTVRRRDELDAVDALVIPGGESTTMSHLLLDLDLLGPLRARLADGLPAYGSCAGMILLASEILDAGAAGRQALPLRAMNMTVRRNAFGSQVDSFEGDIEFAGLDDPVRAVFIRAPWVERVGDGVQVLARAAGHIVAVRQGAVLATAFHPEMTGDRRIHQLFVDIVTSAA</sequence>
<name>PDXT_MYCTA</name>
<keyword id="KW-0315">Glutamine amidotransferase</keyword>
<keyword id="KW-0378">Hydrolase</keyword>
<keyword id="KW-0456">Lyase</keyword>
<keyword id="KW-0663">Pyridoxal phosphate</keyword>
<keyword id="KW-1185">Reference proteome</keyword>
<proteinExistence type="inferred from homology"/>
<gene>
    <name evidence="1" type="primary">pdxT</name>
    <name type="ordered locus">MRA_2632</name>
</gene>
<protein>
    <recommendedName>
        <fullName evidence="1">Pyridoxal 5'-phosphate synthase subunit PdxT</fullName>
        <ecNumber evidence="1">4.3.3.6</ecNumber>
    </recommendedName>
    <alternativeName>
        <fullName evidence="1">Pdx2</fullName>
    </alternativeName>
    <alternativeName>
        <fullName evidence="1">Pyridoxal 5'-phosphate synthase glutaminase subunit</fullName>
        <ecNumber evidence="1">3.5.1.2</ecNumber>
    </alternativeName>
</protein>
<accession>A5U5V5</accession>
<comment type="function">
    <text evidence="1">Catalyzes the hydrolysis of glutamine to glutamate and ammonia as part of the biosynthesis of pyridoxal 5'-phosphate. The resulting ammonia molecule is channeled to the active site of PdxS.</text>
</comment>
<comment type="catalytic activity">
    <reaction evidence="1">
        <text>aldehydo-D-ribose 5-phosphate + D-glyceraldehyde 3-phosphate + L-glutamine = pyridoxal 5'-phosphate + L-glutamate + phosphate + 3 H2O + H(+)</text>
        <dbReference type="Rhea" id="RHEA:31507"/>
        <dbReference type="ChEBI" id="CHEBI:15377"/>
        <dbReference type="ChEBI" id="CHEBI:15378"/>
        <dbReference type="ChEBI" id="CHEBI:29985"/>
        <dbReference type="ChEBI" id="CHEBI:43474"/>
        <dbReference type="ChEBI" id="CHEBI:58273"/>
        <dbReference type="ChEBI" id="CHEBI:58359"/>
        <dbReference type="ChEBI" id="CHEBI:59776"/>
        <dbReference type="ChEBI" id="CHEBI:597326"/>
        <dbReference type="EC" id="4.3.3.6"/>
    </reaction>
</comment>
<comment type="catalytic activity">
    <reaction evidence="1">
        <text>L-glutamine + H2O = L-glutamate + NH4(+)</text>
        <dbReference type="Rhea" id="RHEA:15889"/>
        <dbReference type="ChEBI" id="CHEBI:15377"/>
        <dbReference type="ChEBI" id="CHEBI:28938"/>
        <dbReference type="ChEBI" id="CHEBI:29985"/>
        <dbReference type="ChEBI" id="CHEBI:58359"/>
        <dbReference type="EC" id="3.5.1.2"/>
    </reaction>
</comment>
<comment type="pathway">
    <text evidence="1">Cofactor biosynthesis; pyridoxal 5'-phosphate biosynthesis.</text>
</comment>
<comment type="subunit">
    <text evidence="1">In the presence of PdxS, forms a dodecamer of heterodimers. Only shows activity in the heterodimer.</text>
</comment>
<comment type="similarity">
    <text evidence="1">Belongs to the glutaminase PdxT/SNO family.</text>
</comment>
<organism>
    <name type="scientific">Mycobacterium tuberculosis (strain ATCC 25177 / H37Ra)</name>
    <dbReference type="NCBI Taxonomy" id="419947"/>
    <lineage>
        <taxon>Bacteria</taxon>
        <taxon>Bacillati</taxon>
        <taxon>Actinomycetota</taxon>
        <taxon>Actinomycetes</taxon>
        <taxon>Mycobacteriales</taxon>
        <taxon>Mycobacteriaceae</taxon>
        <taxon>Mycobacterium</taxon>
        <taxon>Mycobacterium tuberculosis complex</taxon>
    </lineage>
</organism>
<evidence type="ECO:0000255" key="1">
    <source>
        <dbReference type="HAMAP-Rule" id="MF_01615"/>
    </source>
</evidence>
<dbReference type="EC" id="4.3.3.6" evidence="1"/>
<dbReference type="EC" id="3.5.1.2" evidence="1"/>
<dbReference type="EMBL" id="CP000611">
    <property type="protein sequence ID" value="ABQ74405.1"/>
    <property type="molecule type" value="Genomic_DNA"/>
</dbReference>
<dbReference type="RefSeq" id="WP_003413465.1">
    <property type="nucleotide sequence ID" value="NZ_CP016972.1"/>
</dbReference>
<dbReference type="SMR" id="A5U5V5"/>
<dbReference type="MEROPS" id="C26.A32"/>
<dbReference type="KEGG" id="mra:MRA_2632"/>
<dbReference type="eggNOG" id="COG0311">
    <property type="taxonomic scope" value="Bacteria"/>
</dbReference>
<dbReference type="HOGENOM" id="CLU_069674_2_0_11"/>
<dbReference type="UniPathway" id="UPA00245"/>
<dbReference type="Proteomes" id="UP000001988">
    <property type="component" value="Chromosome"/>
</dbReference>
<dbReference type="GO" id="GO:0005829">
    <property type="term" value="C:cytosol"/>
    <property type="evidence" value="ECO:0007669"/>
    <property type="project" value="TreeGrafter"/>
</dbReference>
<dbReference type="GO" id="GO:1903600">
    <property type="term" value="C:glutaminase complex"/>
    <property type="evidence" value="ECO:0007669"/>
    <property type="project" value="TreeGrafter"/>
</dbReference>
<dbReference type="GO" id="GO:0004359">
    <property type="term" value="F:glutaminase activity"/>
    <property type="evidence" value="ECO:0007669"/>
    <property type="project" value="UniProtKB-UniRule"/>
</dbReference>
<dbReference type="GO" id="GO:0036381">
    <property type="term" value="F:pyridoxal 5'-phosphate synthase (glutamine hydrolysing) activity"/>
    <property type="evidence" value="ECO:0007669"/>
    <property type="project" value="UniProtKB-UniRule"/>
</dbReference>
<dbReference type="GO" id="GO:0006543">
    <property type="term" value="P:glutamine catabolic process"/>
    <property type="evidence" value="ECO:0007669"/>
    <property type="project" value="UniProtKB-UniRule"/>
</dbReference>
<dbReference type="GO" id="GO:0042823">
    <property type="term" value="P:pyridoxal phosphate biosynthetic process"/>
    <property type="evidence" value="ECO:0007669"/>
    <property type="project" value="UniProtKB-UniRule"/>
</dbReference>
<dbReference type="GO" id="GO:0008614">
    <property type="term" value="P:pyridoxine metabolic process"/>
    <property type="evidence" value="ECO:0007669"/>
    <property type="project" value="TreeGrafter"/>
</dbReference>
<dbReference type="CDD" id="cd01749">
    <property type="entry name" value="GATase1_PB"/>
    <property type="match status" value="1"/>
</dbReference>
<dbReference type="FunFam" id="3.40.50.880:FF:000010">
    <property type="entry name" value="uncharacterized protein LOC100176842 isoform X2"/>
    <property type="match status" value="1"/>
</dbReference>
<dbReference type="Gene3D" id="3.40.50.880">
    <property type="match status" value="1"/>
</dbReference>
<dbReference type="HAMAP" id="MF_01615">
    <property type="entry name" value="PdxT"/>
    <property type="match status" value="1"/>
</dbReference>
<dbReference type="InterPro" id="IPR029062">
    <property type="entry name" value="Class_I_gatase-like"/>
</dbReference>
<dbReference type="InterPro" id="IPR002161">
    <property type="entry name" value="PdxT/SNO"/>
</dbReference>
<dbReference type="InterPro" id="IPR021196">
    <property type="entry name" value="PdxT/SNO_CS"/>
</dbReference>
<dbReference type="NCBIfam" id="TIGR03800">
    <property type="entry name" value="PLP_synth_Pdx2"/>
    <property type="match status" value="1"/>
</dbReference>
<dbReference type="PANTHER" id="PTHR31559">
    <property type="entry name" value="PYRIDOXAL 5'-PHOSPHATE SYNTHASE SUBUNIT SNO"/>
    <property type="match status" value="1"/>
</dbReference>
<dbReference type="PANTHER" id="PTHR31559:SF0">
    <property type="entry name" value="PYRIDOXAL 5'-PHOSPHATE SYNTHASE SUBUNIT SNO1-RELATED"/>
    <property type="match status" value="1"/>
</dbReference>
<dbReference type="Pfam" id="PF01174">
    <property type="entry name" value="SNO"/>
    <property type="match status" value="1"/>
</dbReference>
<dbReference type="PIRSF" id="PIRSF005639">
    <property type="entry name" value="Glut_amidoT_SNO"/>
    <property type="match status" value="1"/>
</dbReference>
<dbReference type="SUPFAM" id="SSF52317">
    <property type="entry name" value="Class I glutamine amidotransferase-like"/>
    <property type="match status" value="1"/>
</dbReference>
<dbReference type="PROSITE" id="PS01236">
    <property type="entry name" value="PDXT_SNO_1"/>
    <property type="match status" value="1"/>
</dbReference>
<dbReference type="PROSITE" id="PS51130">
    <property type="entry name" value="PDXT_SNO_2"/>
    <property type="match status" value="1"/>
</dbReference>